<dbReference type="EMBL" id="CP000480">
    <property type="protein sequence ID" value="ABK75343.1"/>
    <property type="molecule type" value="Genomic_DNA"/>
</dbReference>
<dbReference type="EMBL" id="CP001663">
    <property type="protein sequence ID" value="AFP37879.1"/>
    <property type="molecule type" value="Genomic_DNA"/>
</dbReference>
<dbReference type="RefSeq" id="WP_003892829.1">
    <property type="nucleotide sequence ID" value="NZ_SIJM01000016.1"/>
</dbReference>
<dbReference type="RefSeq" id="YP_885825.1">
    <property type="nucleotide sequence ID" value="NC_008596.1"/>
</dbReference>
<dbReference type="PDB" id="5O5J">
    <property type="method" value="EM"/>
    <property type="resolution" value="3.45 A"/>
    <property type="chains" value="C=1-275"/>
</dbReference>
<dbReference type="PDB" id="5O61">
    <property type="method" value="EM"/>
    <property type="resolution" value="3.31 A"/>
    <property type="chains" value="BC=1-275"/>
</dbReference>
<dbReference type="PDB" id="5XYU">
    <property type="method" value="EM"/>
    <property type="resolution" value="3.45 A"/>
    <property type="chains" value="C=1-275"/>
</dbReference>
<dbReference type="PDB" id="5ZEB">
    <property type="method" value="EM"/>
    <property type="resolution" value="3.40 A"/>
    <property type="chains" value="c=1-275"/>
</dbReference>
<dbReference type="PDB" id="5ZEP">
    <property type="method" value="EM"/>
    <property type="resolution" value="3.40 A"/>
    <property type="chains" value="c=1-275"/>
</dbReference>
<dbReference type="PDB" id="5ZEU">
    <property type="method" value="EM"/>
    <property type="resolution" value="3.70 A"/>
    <property type="chains" value="c=1-275"/>
</dbReference>
<dbReference type="PDB" id="6DZI">
    <property type="method" value="EM"/>
    <property type="resolution" value="3.46 A"/>
    <property type="chains" value="k=2-209"/>
</dbReference>
<dbReference type="PDB" id="6DZK">
    <property type="method" value="EM"/>
    <property type="resolution" value="3.60 A"/>
    <property type="chains" value="C=1-275"/>
</dbReference>
<dbReference type="PDB" id="8FR8">
    <property type="method" value="EM"/>
    <property type="resolution" value="2.76 A"/>
    <property type="chains" value="G=2-209"/>
</dbReference>
<dbReference type="PDB" id="8V9J">
    <property type="method" value="EM"/>
    <property type="resolution" value="3.10 A"/>
    <property type="chains" value="c=1-275"/>
</dbReference>
<dbReference type="PDB" id="8V9K">
    <property type="method" value="EM"/>
    <property type="resolution" value="3.10 A"/>
    <property type="chains" value="c=1-275"/>
</dbReference>
<dbReference type="PDB" id="8V9L">
    <property type="method" value="EM"/>
    <property type="resolution" value="3.00 A"/>
    <property type="chains" value="c=1-275"/>
</dbReference>
<dbReference type="PDB" id="8VIO">
    <property type="method" value="EM"/>
    <property type="resolution" value="3.26 A"/>
    <property type="chains" value="i=1-275"/>
</dbReference>
<dbReference type="PDB" id="8WHX">
    <property type="method" value="EM"/>
    <property type="resolution" value="2.80 A"/>
    <property type="chains" value="d=1-275"/>
</dbReference>
<dbReference type="PDB" id="8WI7">
    <property type="method" value="EM"/>
    <property type="resolution" value="3.50 A"/>
    <property type="chains" value="d=1-275"/>
</dbReference>
<dbReference type="PDB" id="8WI9">
    <property type="method" value="EM"/>
    <property type="resolution" value="3.50 A"/>
    <property type="chains" value="d=1-275"/>
</dbReference>
<dbReference type="PDB" id="8WIB">
    <property type="method" value="EM"/>
    <property type="resolution" value="3.50 A"/>
    <property type="chains" value="d=1-275"/>
</dbReference>
<dbReference type="PDB" id="8WID">
    <property type="method" value="EM"/>
    <property type="resolution" value="3.50 A"/>
    <property type="chains" value="d=1-275"/>
</dbReference>
<dbReference type="PDB" id="8WIF">
    <property type="method" value="EM"/>
    <property type="resolution" value="2.90 A"/>
    <property type="chains" value="d=1-275"/>
</dbReference>
<dbReference type="PDBsum" id="5O5J"/>
<dbReference type="PDBsum" id="5O61"/>
<dbReference type="PDBsum" id="5XYU"/>
<dbReference type="PDBsum" id="5ZEB"/>
<dbReference type="PDBsum" id="5ZEP"/>
<dbReference type="PDBsum" id="5ZEU"/>
<dbReference type="PDBsum" id="6DZI"/>
<dbReference type="PDBsum" id="6DZK"/>
<dbReference type="PDBsum" id="8FR8"/>
<dbReference type="PDBsum" id="8V9J"/>
<dbReference type="PDBsum" id="8V9K"/>
<dbReference type="PDBsum" id="8V9L"/>
<dbReference type="PDBsum" id="8VIO"/>
<dbReference type="PDBsum" id="8WHX"/>
<dbReference type="PDBsum" id="8WI7"/>
<dbReference type="PDBsum" id="8WI9"/>
<dbReference type="PDBsum" id="8WIB"/>
<dbReference type="PDBsum" id="8WID"/>
<dbReference type="PDBsum" id="8WIF"/>
<dbReference type="EMDB" id="EMD-29397"/>
<dbReference type="EMDB" id="EMD-3748"/>
<dbReference type="EMDB" id="EMD-3751"/>
<dbReference type="EMDB" id="EMD-37551"/>
<dbReference type="EMDB" id="EMD-37559"/>
<dbReference type="EMDB" id="EMD-37561"/>
<dbReference type="EMDB" id="EMD-37562"/>
<dbReference type="EMDB" id="EMD-37564"/>
<dbReference type="EMDB" id="EMD-37565"/>
<dbReference type="EMDB" id="EMD-43074"/>
<dbReference type="EMDB" id="EMD-43075"/>
<dbReference type="EMDB" id="EMD-43076"/>
<dbReference type="EMDB" id="EMD-43267"/>
<dbReference type="EMDB" id="EMD-6790"/>
<dbReference type="EMDB" id="EMD-6920"/>
<dbReference type="EMDB" id="EMD-6921"/>
<dbReference type="EMDB" id="EMD-6923"/>
<dbReference type="EMDB" id="EMD-8932"/>
<dbReference type="EMDB" id="EMD-8934"/>
<dbReference type="SMR" id="A0QSD7"/>
<dbReference type="IntAct" id="A0QSD7">
    <property type="interactions" value="1"/>
</dbReference>
<dbReference type="STRING" id="246196.MSMEG_1442"/>
<dbReference type="PaxDb" id="246196-MSMEI_1406"/>
<dbReference type="GeneID" id="93456286"/>
<dbReference type="KEGG" id="msb:LJ00_07195"/>
<dbReference type="KEGG" id="msg:MSMEI_1406"/>
<dbReference type="KEGG" id="msm:MSMEG_1442"/>
<dbReference type="PATRIC" id="fig|246196.19.peg.1428"/>
<dbReference type="eggNOG" id="COG0092">
    <property type="taxonomic scope" value="Bacteria"/>
</dbReference>
<dbReference type="OrthoDB" id="9806396at2"/>
<dbReference type="Proteomes" id="UP000000757">
    <property type="component" value="Chromosome"/>
</dbReference>
<dbReference type="Proteomes" id="UP000006158">
    <property type="component" value="Chromosome"/>
</dbReference>
<dbReference type="GO" id="GO:0022627">
    <property type="term" value="C:cytosolic small ribosomal subunit"/>
    <property type="evidence" value="ECO:0007669"/>
    <property type="project" value="TreeGrafter"/>
</dbReference>
<dbReference type="GO" id="GO:0003729">
    <property type="term" value="F:mRNA binding"/>
    <property type="evidence" value="ECO:0007669"/>
    <property type="project" value="UniProtKB-UniRule"/>
</dbReference>
<dbReference type="GO" id="GO:0019843">
    <property type="term" value="F:rRNA binding"/>
    <property type="evidence" value="ECO:0007669"/>
    <property type="project" value="UniProtKB-UniRule"/>
</dbReference>
<dbReference type="GO" id="GO:0003735">
    <property type="term" value="F:structural constituent of ribosome"/>
    <property type="evidence" value="ECO:0007669"/>
    <property type="project" value="InterPro"/>
</dbReference>
<dbReference type="GO" id="GO:0006412">
    <property type="term" value="P:translation"/>
    <property type="evidence" value="ECO:0007669"/>
    <property type="project" value="UniProtKB-UniRule"/>
</dbReference>
<dbReference type="CDD" id="cd02412">
    <property type="entry name" value="KH-II_30S_S3"/>
    <property type="match status" value="1"/>
</dbReference>
<dbReference type="FunFam" id="3.30.1140.32:FF:000002">
    <property type="entry name" value="30S ribosomal protein S3"/>
    <property type="match status" value="1"/>
</dbReference>
<dbReference type="FunFam" id="3.30.300.20:FF:000001">
    <property type="entry name" value="30S ribosomal protein S3"/>
    <property type="match status" value="1"/>
</dbReference>
<dbReference type="Gene3D" id="3.30.300.20">
    <property type="match status" value="1"/>
</dbReference>
<dbReference type="Gene3D" id="3.30.1140.32">
    <property type="entry name" value="Ribosomal protein S3, C-terminal domain"/>
    <property type="match status" value="1"/>
</dbReference>
<dbReference type="HAMAP" id="MF_01309_B">
    <property type="entry name" value="Ribosomal_uS3_B"/>
    <property type="match status" value="1"/>
</dbReference>
<dbReference type="InterPro" id="IPR004087">
    <property type="entry name" value="KH_dom"/>
</dbReference>
<dbReference type="InterPro" id="IPR015946">
    <property type="entry name" value="KH_dom-like_a/b"/>
</dbReference>
<dbReference type="InterPro" id="IPR004044">
    <property type="entry name" value="KH_dom_type_2"/>
</dbReference>
<dbReference type="InterPro" id="IPR009019">
    <property type="entry name" value="KH_sf_prok-type"/>
</dbReference>
<dbReference type="InterPro" id="IPR036419">
    <property type="entry name" value="Ribosomal_S3_C_sf"/>
</dbReference>
<dbReference type="InterPro" id="IPR005704">
    <property type="entry name" value="Ribosomal_uS3_bac-typ"/>
</dbReference>
<dbReference type="InterPro" id="IPR001351">
    <property type="entry name" value="Ribosomal_uS3_C"/>
</dbReference>
<dbReference type="InterPro" id="IPR018280">
    <property type="entry name" value="Ribosomal_uS3_CS"/>
</dbReference>
<dbReference type="NCBIfam" id="TIGR01009">
    <property type="entry name" value="rpsC_bact"/>
    <property type="match status" value="1"/>
</dbReference>
<dbReference type="PANTHER" id="PTHR11760">
    <property type="entry name" value="30S/40S RIBOSOMAL PROTEIN S3"/>
    <property type="match status" value="1"/>
</dbReference>
<dbReference type="PANTHER" id="PTHR11760:SF19">
    <property type="entry name" value="SMALL RIBOSOMAL SUBUNIT PROTEIN US3C"/>
    <property type="match status" value="1"/>
</dbReference>
<dbReference type="Pfam" id="PF07650">
    <property type="entry name" value="KH_2"/>
    <property type="match status" value="1"/>
</dbReference>
<dbReference type="Pfam" id="PF00189">
    <property type="entry name" value="Ribosomal_S3_C"/>
    <property type="match status" value="1"/>
</dbReference>
<dbReference type="SMART" id="SM00322">
    <property type="entry name" value="KH"/>
    <property type="match status" value="1"/>
</dbReference>
<dbReference type="SUPFAM" id="SSF54814">
    <property type="entry name" value="Prokaryotic type KH domain (KH-domain type II)"/>
    <property type="match status" value="1"/>
</dbReference>
<dbReference type="SUPFAM" id="SSF54821">
    <property type="entry name" value="Ribosomal protein S3 C-terminal domain"/>
    <property type="match status" value="1"/>
</dbReference>
<dbReference type="PROSITE" id="PS50823">
    <property type="entry name" value="KH_TYPE_2"/>
    <property type="match status" value="1"/>
</dbReference>
<dbReference type="PROSITE" id="PS00548">
    <property type="entry name" value="RIBOSOMAL_S3"/>
    <property type="match status" value="1"/>
</dbReference>
<gene>
    <name evidence="1" type="primary">rpsC</name>
    <name type="ordered locus">MSMEG_1442</name>
    <name type="ordered locus">MSMEI_1406</name>
</gene>
<name>RS3_MYCS2</name>
<evidence type="ECO:0000255" key="1">
    <source>
        <dbReference type="HAMAP-Rule" id="MF_01309"/>
    </source>
</evidence>
<evidence type="ECO:0000256" key="2">
    <source>
        <dbReference type="SAM" id="MobiDB-lite"/>
    </source>
</evidence>
<evidence type="ECO:0000269" key="3">
    <source>
    </source>
</evidence>
<evidence type="ECO:0000305" key="4"/>
<evidence type="ECO:0007829" key="5">
    <source>
        <dbReference type="PDB" id="5O5J"/>
    </source>
</evidence>
<evidence type="ECO:0007829" key="6">
    <source>
        <dbReference type="PDB" id="5XYU"/>
    </source>
</evidence>
<feature type="chain" id="PRO_0000293829" description="Small ribosomal subunit protein uS3">
    <location>
        <begin position="1"/>
        <end position="275"/>
    </location>
</feature>
<feature type="domain" description="KH type-2" evidence="1">
    <location>
        <begin position="38"/>
        <end position="106"/>
    </location>
</feature>
<feature type="region of interest" description="Disordered" evidence="2">
    <location>
        <begin position="215"/>
        <end position="275"/>
    </location>
</feature>
<feature type="compositionally biased region" description="Low complexity" evidence="2">
    <location>
        <begin position="237"/>
        <end position="275"/>
    </location>
</feature>
<feature type="helix" evidence="6">
    <location>
        <begin position="7"/>
        <end position="10"/>
    </location>
</feature>
<feature type="turn" evidence="6">
    <location>
        <begin position="11"/>
        <end position="16"/>
    </location>
</feature>
<feature type="strand" evidence="5">
    <location>
        <begin position="19"/>
        <end position="21"/>
    </location>
</feature>
<feature type="helix" evidence="6">
    <location>
        <begin position="28"/>
        <end position="41"/>
    </location>
</feature>
<feature type="strand" evidence="6">
    <location>
        <begin position="53"/>
        <end position="56"/>
    </location>
</feature>
<feature type="strand" evidence="6">
    <location>
        <begin position="66"/>
        <end position="68"/>
    </location>
</feature>
<feature type="helix" evidence="5">
    <location>
        <begin position="72"/>
        <end position="74"/>
    </location>
</feature>
<feature type="helix" evidence="6">
    <location>
        <begin position="82"/>
        <end position="94"/>
    </location>
</feature>
<feature type="strand" evidence="5">
    <location>
        <begin position="96"/>
        <end position="104"/>
    </location>
</feature>
<feature type="turn" evidence="6">
    <location>
        <begin position="108"/>
        <end position="110"/>
    </location>
</feature>
<feature type="helix" evidence="6">
    <location>
        <begin position="112"/>
        <end position="124"/>
    </location>
</feature>
<feature type="helix" evidence="6">
    <location>
        <begin position="129"/>
        <end position="141"/>
    </location>
</feature>
<feature type="strand" evidence="6">
    <location>
        <begin position="148"/>
        <end position="155"/>
    </location>
</feature>
<feature type="strand" evidence="6">
    <location>
        <begin position="165"/>
        <end position="171"/>
    </location>
</feature>
<feature type="strand" evidence="6">
    <location>
        <begin position="178"/>
        <end position="180"/>
    </location>
</feature>
<feature type="strand" evidence="6">
    <location>
        <begin position="183"/>
        <end position="190"/>
    </location>
</feature>
<feature type="strand" evidence="6">
    <location>
        <begin position="195"/>
        <end position="203"/>
    </location>
</feature>
<comment type="function">
    <text evidence="1">Binds the lower part of the 30S subunit head. Binds mRNA in the 70S ribosome, positioning it for translation.</text>
</comment>
<comment type="subunit">
    <text evidence="1">Part of the 30S ribosomal subunit. Forms a tight complex with proteins S10 and S14.</text>
</comment>
<comment type="miscellaneous">
    <text evidence="3">Binds 2-aminothiazole antibiotics, which are antitubercular agents (PubMed:30416491).</text>
</comment>
<comment type="similarity">
    <text evidence="1">Belongs to the universal ribosomal protein uS3 family.</text>
</comment>
<proteinExistence type="evidence at protein level"/>
<organism>
    <name type="scientific">Mycolicibacterium smegmatis (strain ATCC 700084 / mc(2)155)</name>
    <name type="common">Mycobacterium smegmatis</name>
    <dbReference type="NCBI Taxonomy" id="246196"/>
    <lineage>
        <taxon>Bacteria</taxon>
        <taxon>Bacillati</taxon>
        <taxon>Actinomycetota</taxon>
        <taxon>Actinomycetes</taxon>
        <taxon>Mycobacteriales</taxon>
        <taxon>Mycobacteriaceae</taxon>
        <taxon>Mycolicibacterium</taxon>
    </lineage>
</organism>
<sequence length="275" mass="30139">MGQKINPHGFRLGITTEWKSRWYADKQYKDYVKEDVAIRKLLATGLERAGIADVEIERTRDRVRVDIHTARPGIVIGRRGTEADRIRADLEKLTGKQVQLNILEVKNPESQAQLVAQGVAEQLSNRVAFRRAMRKAIQSAMRQPNVKGIRVQCSGRLGGAEMSRSEFYREGRVPLHTLRADIDYGLYEAKTTFGRIGVKVWIYKGDIVGGKRELAAAAPASDRPRRERPSGTRPRRSGSAGTTATSTEAGRAATSDAPAAGTAAAAEAPAESTES</sequence>
<reference key="1">
    <citation type="submission" date="2006-10" db="EMBL/GenBank/DDBJ databases">
        <authorList>
            <person name="Fleischmann R.D."/>
            <person name="Dodson R.J."/>
            <person name="Haft D.H."/>
            <person name="Merkel J.S."/>
            <person name="Nelson W.C."/>
            <person name="Fraser C.M."/>
        </authorList>
    </citation>
    <scope>NUCLEOTIDE SEQUENCE [LARGE SCALE GENOMIC DNA]</scope>
    <source>
        <strain>ATCC 700084 / mc(2)155</strain>
    </source>
</reference>
<reference key="2">
    <citation type="journal article" date="2007" name="Genome Biol.">
        <title>Interrupted coding sequences in Mycobacterium smegmatis: authentic mutations or sequencing errors?</title>
        <authorList>
            <person name="Deshayes C."/>
            <person name="Perrodou E."/>
            <person name="Gallien S."/>
            <person name="Euphrasie D."/>
            <person name="Schaeffer C."/>
            <person name="Van-Dorsselaer A."/>
            <person name="Poch O."/>
            <person name="Lecompte O."/>
            <person name="Reyrat J.-M."/>
        </authorList>
    </citation>
    <scope>NUCLEOTIDE SEQUENCE [LARGE SCALE GENOMIC DNA]</scope>
    <source>
        <strain>ATCC 700084 / mc(2)155</strain>
    </source>
</reference>
<reference key="3">
    <citation type="journal article" date="2009" name="Genome Res.">
        <title>Ortho-proteogenomics: multiple proteomes investigation through orthology and a new MS-based protocol.</title>
        <authorList>
            <person name="Gallien S."/>
            <person name="Perrodou E."/>
            <person name="Carapito C."/>
            <person name="Deshayes C."/>
            <person name="Reyrat J.-M."/>
            <person name="Van Dorsselaer A."/>
            <person name="Poch O."/>
            <person name="Schaeffer C."/>
            <person name="Lecompte O."/>
        </authorList>
    </citation>
    <scope>NUCLEOTIDE SEQUENCE [LARGE SCALE GENOMIC DNA]</scope>
    <source>
        <strain>ATCC 700084 / mc(2)155</strain>
    </source>
</reference>
<reference key="4">
    <citation type="journal article" date="2018" name="Front. Microbiol.">
        <title>Identification of Enolase as the Target of 2-Aminothiazoles in Mycobacterium tuberculosis.</title>
        <authorList>
            <person name="Wescott H.H."/>
            <person name="Zuniga E.S."/>
            <person name="Bajpai A."/>
            <person name="Trujillo C."/>
            <person name="Ehrt S."/>
            <person name="Schnappinger D."/>
            <person name="Roberts D.M."/>
            <person name="Parish T."/>
        </authorList>
    </citation>
    <scope>IDENTIFICATION BY MASS SPECTROMETRY</scope>
    <scope>INTERACTION WITH 2-AMINOTHIAZOLE ANTIBIOTICS</scope>
    <source>
        <strain>ATCC 700084 / mc(2)155</strain>
    </source>
</reference>
<protein>
    <recommendedName>
        <fullName evidence="1">Small ribosomal subunit protein uS3</fullName>
    </recommendedName>
    <alternativeName>
        <fullName evidence="4">30S ribosomal protein S3</fullName>
    </alternativeName>
</protein>
<accession>A0QSD7</accession>
<accession>I7G5M8</accession>
<keyword id="KW-0002">3D-structure</keyword>
<keyword id="KW-1185">Reference proteome</keyword>
<keyword id="KW-0687">Ribonucleoprotein</keyword>
<keyword id="KW-0689">Ribosomal protein</keyword>
<keyword id="KW-0694">RNA-binding</keyword>
<keyword id="KW-0699">rRNA-binding</keyword>